<feature type="chain" id="PRO_1000060660" description="Integration host factor subunit beta">
    <location>
        <begin position="1"/>
        <end position="95"/>
    </location>
</feature>
<sequence length="95" mass="10678">MTKSELIEKLATRQSQLSAKEVESAIKEMLEQMATTLESGDRIEIRGFGSFSLHYRAPRTGRNPKTGSSVELEGKYVPHFKPGKELRERVDAVNV</sequence>
<dbReference type="EMBL" id="CP000681">
    <property type="protein sequence ID" value="ABP75762.1"/>
    <property type="molecule type" value="Genomic_DNA"/>
</dbReference>
<dbReference type="SMR" id="A4Y729"/>
<dbReference type="STRING" id="319224.Sputcn32_2041"/>
<dbReference type="KEGG" id="spc:Sputcn32_2041"/>
<dbReference type="eggNOG" id="COG0776">
    <property type="taxonomic scope" value="Bacteria"/>
</dbReference>
<dbReference type="HOGENOM" id="CLU_105066_2_0_6"/>
<dbReference type="GO" id="GO:0005694">
    <property type="term" value="C:chromosome"/>
    <property type="evidence" value="ECO:0007669"/>
    <property type="project" value="InterPro"/>
</dbReference>
<dbReference type="GO" id="GO:0005829">
    <property type="term" value="C:cytosol"/>
    <property type="evidence" value="ECO:0007669"/>
    <property type="project" value="TreeGrafter"/>
</dbReference>
<dbReference type="GO" id="GO:0003677">
    <property type="term" value="F:DNA binding"/>
    <property type="evidence" value="ECO:0007669"/>
    <property type="project" value="UniProtKB-UniRule"/>
</dbReference>
<dbReference type="GO" id="GO:0030527">
    <property type="term" value="F:structural constituent of chromatin"/>
    <property type="evidence" value="ECO:0007669"/>
    <property type="project" value="InterPro"/>
</dbReference>
<dbReference type="GO" id="GO:0006310">
    <property type="term" value="P:DNA recombination"/>
    <property type="evidence" value="ECO:0007669"/>
    <property type="project" value="UniProtKB-UniRule"/>
</dbReference>
<dbReference type="GO" id="GO:0006355">
    <property type="term" value="P:regulation of DNA-templated transcription"/>
    <property type="evidence" value="ECO:0007669"/>
    <property type="project" value="UniProtKB-UniRule"/>
</dbReference>
<dbReference type="GO" id="GO:0006417">
    <property type="term" value="P:regulation of translation"/>
    <property type="evidence" value="ECO:0007669"/>
    <property type="project" value="UniProtKB-UniRule"/>
</dbReference>
<dbReference type="CDD" id="cd13836">
    <property type="entry name" value="IHF_B"/>
    <property type="match status" value="1"/>
</dbReference>
<dbReference type="FunFam" id="4.10.520.10:FF:000003">
    <property type="entry name" value="Integration host factor subunit beta"/>
    <property type="match status" value="1"/>
</dbReference>
<dbReference type="Gene3D" id="4.10.520.10">
    <property type="entry name" value="IHF-like DNA-binding proteins"/>
    <property type="match status" value="1"/>
</dbReference>
<dbReference type="HAMAP" id="MF_00381">
    <property type="entry name" value="IHF_beta"/>
    <property type="match status" value="1"/>
</dbReference>
<dbReference type="InterPro" id="IPR000119">
    <property type="entry name" value="Hist_DNA-bd"/>
</dbReference>
<dbReference type="InterPro" id="IPR020816">
    <property type="entry name" value="Histone-like_DNA-bd_CS"/>
</dbReference>
<dbReference type="InterPro" id="IPR010992">
    <property type="entry name" value="IHF-like_DNA-bd_dom_sf"/>
</dbReference>
<dbReference type="InterPro" id="IPR005685">
    <property type="entry name" value="IHF_beta"/>
</dbReference>
<dbReference type="NCBIfam" id="TIGR00988">
    <property type="entry name" value="hip"/>
    <property type="match status" value="1"/>
</dbReference>
<dbReference type="NCBIfam" id="NF001222">
    <property type="entry name" value="PRK00199.1"/>
    <property type="match status" value="1"/>
</dbReference>
<dbReference type="PANTHER" id="PTHR33175">
    <property type="entry name" value="DNA-BINDING PROTEIN HU"/>
    <property type="match status" value="1"/>
</dbReference>
<dbReference type="PANTHER" id="PTHR33175:SF5">
    <property type="entry name" value="INTEGRATION HOST FACTOR SUBUNIT BETA"/>
    <property type="match status" value="1"/>
</dbReference>
<dbReference type="Pfam" id="PF00216">
    <property type="entry name" value="Bac_DNA_binding"/>
    <property type="match status" value="1"/>
</dbReference>
<dbReference type="PRINTS" id="PR01727">
    <property type="entry name" value="DNABINDINGHU"/>
</dbReference>
<dbReference type="SMART" id="SM00411">
    <property type="entry name" value="BHL"/>
    <property type="match status" value="1"/>
</dbReference>
<dbReference type="SUPFAM" id="SSF47729">
    <property type="entry name" value="IHF-like DNA-binding proteins"/>
    <property type="match status" value="1"/>
</dbReference>
<dbReference type="PROSITE" id="PS00045">
    <property type="entry name" value="HISTONE_LIKE"/>
    <property type="match status" value="1"/>
</dbReference>
<evidence type="ECO:0000255" key="1">
    <source>
        <dbReference type="HAMAP-Rule" id="MF_00381"/>
    </source>
</evidence>
<protein>
    <recommendedName>
        <fullName evidence="1">Integration host factor subunit beta</fullName>
        <shortName evidence="1">IHF-beta</shortName>
    </recommendedName>
</protein>
<keyword id="KW-0233">DNA recombination</keyword>
<keyword id="KW-0238">DNA-binding</keyword>
<keyword id="KW-0804">Transcription</keyword>
<keyword id="KW-0805">Transcription regulation</keyword>
<keyword id="KW-0810">Translation regulation</keyword>
<name>IHFB_SHEPC</name>
<accession>A4Y729</accession>
<comment type="function">
    <text evidence="1">This protein is one of the two subunits of integration host factor, a specific DNA-binding protein that functions in genetic recombination as well as in transcriptional and translational control.</text>
</comment>
<comment type="subunit">
    <text evidence="1">Heterodimer of an alpha and a beta chain.</text>
</comment>
<comment type="similarity">
    <text evidence="1">Belongs to the bacterial histone-like protein family.</text>
</comment>
<organism>
    <name type="scientific">Shewanella putrefaciens (strain CN-32 / ATCC BAA-453)</name>
    <dbReference type="NCBI Taxonomy" id="319224"/>
    <lineage>
        <taxon>Bacteria</taxon>
        <taxon>Pseudomonadati</taxon>
        <taxon>Pseudomonadota</taxon>
        <taxon>Gammaproteobacteria</taxon>
        <taxon>Alteromonadales</taxon>
        <taxon>Shewanellaceae</taxon>
        <taxon>Shewanella</taxon>
    </lineage>
</organism>
<gene>
    <name evidence="1" type="primary">ihfB</name>
    <name evidence="1" type="synonym">himD</name>
    <name type="ordered locus">Sputcn32_2041</name>
</gene>
<reference key="1">
    <citation type="submission" date="2007-04" db="EMBL/GenBank/DDBJ databases">
        <title>Complete sequence of Shewanella putrefaciens CN-32.</title>
        <authorList>
            <consortium name="US DOE Joint Genome Institute"/>
            <person name="Copeland A."/>
            <person name="Lucas S."/>
            <person name="Lapidus A."/>
            <person name="Barry K."/>
            <person name="Detter J.C."/>
            <person name="Glavina del Rio T."/>
            <person name="Hammon N."/>
            <person name="Israni S."/>
            <person name="Dalin E."/>
            <person name="Tice H."/>
            <person name="Pitluck S."/>
            <person name="Chain P."/>
            <person name="Malfatti S."/>
            <person name="Shin M."/>
            <person name="Vergez L."/>
            <person name="Schmutz J."/>
            <person name="Larimer F."/>
            <person name="Land M."/>
            <person name="Hauser L."/>
            <person name="Kyrpides N."/>
            <person name="Mikhailova N."/>
            <person name="Romine M.F."/>
            <person name="Fredrickson J."/>
            <person name="Tiedje J."/>
            <person name="Richardson P."/>
        </authorList>
    </citation>
    <scope>NUCLEOTIDE SEQUENCE [LARGE SCALE GENOMIC DNA]</scope>
    <source>
        <strain>CN-32 / ATCC BAA-453</strain>
    </source>
</reference>
<proteinExistence type="inferred from homology"/>